<feature type="initiator methionine" description="Removed" evidence="1">
    <location>
        <position position="1"/>
    </location>
</feature>
<feature type="chain" id="PRO_0000130220" description="Small ribosomal subunit protein uS3">
    <location>
        <begin position="2"/>
        <end position="240"/>
    </location>
</feature>
<feature type="domain" description="KH type-2" evidence="2">
    <location>
        <begin position="39"/>
        <end position="109"/>
    </location>
</feature>
<feature type="region of interest" description="Disordered" evidence="3">
    <location>
        <begin position="219"/>
        <end position="240"/>
    </location>
</feature>
<feature type="compositionally biased region" description="Basic and acidic residues" evidence="3">
    <location>
        <begin position="231"/>
        <end position="240"/>
    </location>
</feature>
<name>RS3_SYNY3</name>
<keyword id="KW-1185">Reference proteome</keyword>
<keyword id="KW-0687">Ribonucleoprotein</keyword>
<keyword id="KW-0689">Ribosomal protein</keyword>
<keyword id="KW-0694">RNA-binding</keyword>
<keyword id="KW-0699">rRNA-binding</keyword>
<reference key="1">
    <citation type="journal article" date="1996" name="DNA Res.">
        <title>Sequence analysis of the genome of the unicellular cyanobacterium Synechocystis sp. strain PCC6803. II. Sequence determination of the entire genome and assignment of potential protein-coding regions.</title>
        <authorList>
            <person name="Kaneko T."/>
            <person name="Sato S."/>
            <person name="Kotani H."/>
            <person name="Tanaka A."/>
            <person name="Asamizu E."/>
            <person name="Nakamura Y."/>
            <person name="Miyajima N."/>
            <person name="Hirosawa M."/>
            <person name="Sugiura M."/>
            <person name="Sasamoto S."/>
            <person name="Kimura T."/>
            <person name="Hosouchi T."/>
            <person name="Matsuno A."/>
            <person name="Muraki A."/>
            <person name="Nakazaki N."/>
            <person name="Naruo K."/>
            <person name="Okumura S."/>
            <person name="Shimpo S."/>
            <person name="Takeuchi C."/>
            <person name="Wada T."/>
            <person name="Watanabe A."/>
            <person name="Yamada M."/>
            <person name="Yasuda M."/>
            <person name="Tabata S."/>
        </authorList>
    </citation>
    <scope>NUCLEOTIDE SEQUENCE [LARGE SCALE GENOMIC DNA]</scope>
    <source>
        <strain>ATCC 27184 / PCC 6803 / Kazusa</strain>
    </source>
</reference>
<sequence length="240" mass="27147">MGQKIHPVGFRLGITKDHKSCWYADPKRYPELLQEDHKIRQYIEKTLNNAGISDIRIERKAEQIELGIHTARPGVVVGRGGSGIEQLREGLQKLLGSARQIRVNVIEVPNADADAALMAEYIGQQLERRVSFRRVVRQALQRAERAEVKGIKIQVSGRLNGAEIARTEWVREGRVPLHTLRADIDYAYRTALTTYGILGIKVWIFKGEVIPGQEAAIVAPPSQPRRKSRRQQFDDRSQDG</sequence>
<proteinExistence type="evidence at protein level"/>
<dbReference type="EMBL" id="BA000022">
    <property type="protein sequence ID" value="BAA17343.1"/>
    <property type="molecule type" value="Genomic_DNA"/>
</dbReference>
<dbReference type="PIR" id="S77496">
    <property type="entry name" value="S77496"/>
</dbReference>
<dbReference type="SMR" id="P73314"/>
<dbReference type="FunCoup" id="P73314">
    <property type="interactions" value="515"/>
</dbReference>
<dbReference type="IntAct" id="P73314">
    <property type="interactions" value="1"/>
</dbReference>
<dbReference type="STRING" id="1148.gene:10498206"/>
<dbReference type="PaxDb" id="1148-1652421"/>
<dbReference type="EnsemblBacteria" id="BAA17343">
    <property type="protein sequence ID" value="BAA17343"/>
    <property type="gene ID" value="BAA17343"/>
</dbReference>
<dbReference type="KEGG" id="syn:sll1804"/>
<dbReference type="eggNOG" id="COG0092">
    <property type="taxonomic scope" value="Bacteria"/>
</dbReference>
<dbReference type="InParanoid" id="P73314"/>
<dbReference type="PhylomeDB" id="P73314"/>
<dbReference type="Proteomes" id="UP000001425">
    <property type="component" value="Chromosome"/>
</dbReference>
<dbReference type="GO" id="GO:0022627">
    <property type="term" value="C:cytosolic small ribosomal subunit"/>
    <property type="evidence" value="ECO:0000318"/>
    <property type="project" value="GO_Central"/>
</dbReference>
<dbReference type="GO" id="GO:0003729">
    <property type="term" value="F:mRNA binding"/>
    <property type="evidence" value="ECO:0007669"/>
    <property type="project" value="UniProtKB-UniRule"/>
</dbReference>
<dbReference type="GO" id="GO:0019843">
    <property type="term" value="F:rRNA binding"/>
    <property type="evidence" value="ECO:0007669"/>
    <property type="project" value="UniProtKB-UniRule"/>
</dbReference>
<dbReference type="GO" id="GO:0003735">
    <property type="term" value="F:structural constituent of ribosome"/>
    <property type="evidence" value="ECO:0000318"/>
    <property type="project" value="GO_Central"/>
</dbReference>
<dbReference type="GO" id="GO:0006412">
    <property type="term" value="P:translation"/>
    <property type="evidence" value="ECO:0007669"/>
    <property type="project" value="UniProtKB-UniRule"/>
</dbReference>
<dbReference type="CDD" id="cd02412">
    <property type="entry name" value="KH-II_30S_S3"/>
    <property type="match status" value="1"/>
</dbReference>
<dbReference type="FunFam" id="3.30.300.20:FF:000001">
    <property type="entry name" value="30S ribosomal protein S3"/>
    <property type="match status" value="1"/>
</dbReference>
<dbReference type="Gene3D" id="3.30.300.20">
    <property type="match status" value="1"/>
</dbReference>
<dbReference type="Gene3D" id="3.30.1140.32">
    <property type="entry name" value="Ribosomal protein S3, C-terminal domain"/>
    <property type="match status" value="1"/>
</dbReference>
<dbReference type="HAMAP" id="MF_01309_B">
    <property type="entry name" value="Ribosomal_uS3_B"/>
    <property type="match status" value="1"/>
</dbReference>
<dbReference type="InterPro" id="IPR004087">
    <property type="entry name" value="KH_dom"/>
</dbReference>
<dbReference type="InterPro" id="IPR015946">
    <property type="entry name" value="KH_dom-like_a/b"/>
</dbReference>
<dbReference type="InterPro" id="IPR004044">
    <property type="entry name" value="KH_dom_type_2"/>
</dbReference>
<dbReference type="InterPro" id="IPR009019">
    <property type="entry name" value="KH_sf_prok-type"/>
</dbReference>
<dbReference type="InterPro" id="IPR036419">
    <property type="entry name" value="Ribosomal_S3_C_sf"/>
</dbReference>
<dbReference type="InterPro" id="IPR005704">
    <property type="entry name" value="Ribosomal_uS3_bac-typ"/>
</dbReference>
<dbReference type="InterPro" id="IPR001351">
    <property type="entry name" value="Ribosomal_uS3_C"/>
</dbReference>
<dbReference type="InterPro" id="IPR018280">
    <property type="entry name" value="Ribosomal_uS3_CS"/>
</dbReference>
<dbReference type="NCBIfam" id="TIGR01009">
    <property type="entry name" value="rpsC_bact"/>
    <property type="match status" value="1"/>
</dbReference>
<dbReference type="PANTHER" id="PTHR11760">
    <property type="entry name" value="30S/40S RIBOSOMAL PROTEIN S3"/>
    <property type="match status" value="1"/>
</dbReference>
<dbReference type="PANTHER" id="PTHR11760:SF19">
    <property type="entry name" value="SMALL RIBOSOMAL SUBUNIT PROTEIN US3C"/>
    <property type="match status" value="1"/>
</dbReference>
<dbReference type="Pfam" id="PF07650">
    <property type="entry name" value="KH_2"/>
    <property type="match status" value="1"/>
</dbReference>
<dbReference type="Pfam" id="PF00189">
    <property type="entry name" value="Ribosomal_S3_C"/>
    <property type="match status" value="1"/>
</dbReference>
<dbReference type="SMART" id="SM00322">
    <property type="entry name" value="KH"/>
    <property type="match status" value="1"/>
</dbReference>
<dbReference type="SUPFAM" id="SSF54814">
    <property type="entry name" value="Prokaryotic type KH domain (KH-domain type II)"/>
    <property type="match status" value="1"/>
</dbReference>
<dbReference type="SUPFAM" id="SSF54821">
    <property type="entry name" value="Ribosomal protein S3 C-terminal domain"/>
    <property type="match status" value="1"/>
</dbReference>
<dbReference type="PROSITE" id="PS50823">
    <property type="entry name" value="KH_TYPE_2"/>
    <property type="match status" value="1"/>
</dbReference>
<dbReference type="PROSITE" id="PS00548">
    <property type="entry name" value="RIBOSOMAL_S3"/>
    <property type="match status" value="1"/>
</dbReference>
<accession>P73314</accession>
<evidence type="ECO:0000250" key="1"/>
<evidence type="ECO:0000255" key="2">
    <source>
        <dbReference type="HAMAP-Rule" id="MF_01309"/>
    </source>
</evidence>
<evidence type="ECO:0000256" key="3">
    <source>
        <dbReference type="SAM" id="MobiDB-lite"/>
    </source>
</evidence>
<evidence type="ECO:0000305" key="4"/>
<protein>
    <recommendedName>
        <fullName evidence="2">Small ribosomal subunit protein uS3</fullName>
    </recommendedName>
    <alternativeName>
        <fullName evidence="4">30S ribosomal protein S3</fullName>
    </alternativeName>
</protein>
<comment type="function">
    <text evidence="2">Binds the lower part of the 30S subunit head. Binds mRNA in the 70S ribosome, positioning it for translation.</text>
</comment>
<comment type="subunit">
    <text evidence="2">Part of the 30S ribosomal subunit. Forms a tight complex with proteins S10 and S14.</text>
</comment>
<comment type="interaction">
    <interactant intactId="EBI-862866">
        <id>P73314</id>
    </interactant>
    <interactant intactId="EBI-862916">
        <id>P52231</id>
        <label>trxA</label>
    </interactant>
    <organismsDiffer>false</organismsDiffer>
    <experiments>5</experiments>
</comment>
<comment type="similarity">
    <text evidence="2">Belongs to the universal ribosomal protein uS3 family.</text>
</comment>
<gene>
    <name evidence="2" type="primary">rpsC</name>
    <name evidence="2" type="synonym">rps3</name>
    <name type="ordered locus">sll1804</name>
</gene>
<organism>
    <name type="scientific">Synechocystis sp. (strain ATCC 27184 / PCC 6803 / Kazusa)</name>
    <dbReference type="NCBI Taxonomy" id="1111708"/>
    <lineage>
        <taxon>Bacteria</taxon>
        <taxon>Bacillati</taxon>
        <taxon>Cyanobacteriota</taxon>
        <taxon>Cyanophyceae</taxon>
        <taxon>Synechococcales</taxon>
        <taxon>Merismopediaceae</taxon>
        <taxon>Synechocystis</taxon>
    </lineage>
</organism>